<gene>
    <name evidence="1" type="primary">folD</name>
    <name type="ordered locus">CKO_02629</name>
</gene>
<accession>A8AJS4</accession>
<evidence type="ECO:0000255" key="1">
    <source>
        <dbReference type="HAMAP-Rule" id="MF_01576"/>
    </source>
</evidence>
<dbReference type="EC" id="1.5.1.5" evidence="1"/>
<dbReference type="EC" id="3.5.4.9" evidence="1"/>
<dbReference type="EMBL" id="CP000822">
    <property type="protein sequence ID" value="ABV13737.1"/>
    <property type="molecule type" value="Genomic_DNA"/>
</dbReference>
<dbReference type="RefSeq" id="WP_012133456.1">
    <property type="nucleotide sequence ID" value="NC_009792.1"/>
</dbReference>
<dbReference type="SMR" id="A8AJS4"/>
<dbReference type="STRING" id="290338.CKO_02629"/>
<dbReference type="GeneID" id="45136492"/>
<dbReference type="KEGG" id="cko:CKO_02629"/>
<dbReference type="HOGENOM" id="CLU_034045_2_1_6"/>
<dbReference type="OrthoDB" id="9803580at2"/>
<dbReference type="UniPathway" id="UPA00193"/>
<dbReference type="Proteomes" id="UP000008148">
    <property type="component" value="Chromosome"/>
</dbReference>
<dbReference type="GO" id="GO:0005829">
    <property type="term" value="C:cytosol"/>
    <property type="evidence" value="ECO:0007669"/>
    <property type="project" value="TreeGrafter"/>
</dbReference>
<dbReference type="GO" id="GO:0004477">
    <property type="term" value="F:methenyltetrahydrofolate cyclohydrolase activity"/>
    <property type="evidence" value="ECO:0007669"/>
    <property type="project" value="UniProtKB-UniRule"/>
</dbReference>
<dbReference type="GO" id="GO:0004488">
    <property type="term" value="F:methylenetetrahydrofolate dehydrogenase (NADP+) activity"/>
    <property type="evidence" value="ECO:0007669"/>
    <property type="project" value="UniProtKB-UniRule"/>
</dbReference>
<dbReference type="GO" id="GO:0000105">
    <property type="term" value="P:L-histidine biosynthetic process"/>
    <property type="evidence" value="ECO:0007669"/>
    <property type="project" value="UniProtKB-KW"/>
</dbReference>
<dbReference type="GO" id="GO:0009086">
    <property type="term" value="P:methionine biosynthetic process"/>
    <property type="evidence" value="ECO:0007669"/>
    <property type="project" value="UniProtKB-KW"/>
</dbReference>
<dbReference type="GO" id="GO:0006164">
    <property type="term" value="P:purine nucleotide biosynthetic process"/>
    <property type="evidence" value="ECO:0007669"/>
    <property type="project" value="UniProtKB-KW"/>
</dbReference>
<dbReference type="GO" id="GO:0035999">
    <property type="term" value="P:tetrahydrofolate interconversion"/>
    <property type="evidence" value="ECO:0007669"/>
    <property type="project" value="UniProtKB-UniRule"/>
</dbReference>
<dbReference type="CDD" id="cd01080">
    <property type="entry name" value="NAD_bind_m-THF_DH_Cyclohyd"/>
    <property type="match status" value="1"/>
</dbReference>
<dbReference type="FunFam" id="3.40.50.10860:FF:000001">
    <property type="entry name" value="Bifunctional protein FolD"/>
    <property type="match status" value="1"/>
</dbReference>
<dbReference type="FunFam" id="3.40.50.720:FF:000006">
    <property type="entry name" value="Bifunctional protein FolD"/>
    <property type="match status" value="1"/>
</dbReference>
<dbReference type="Gene3D" id="3.40.50.10860">
    <property type="entry name" value="Leucine Dehydrogenase, chain A, domain 1"/>
    <property type="match status" value="1"/>
</dbReference>
<dbReference type="Gene3D" id="3.40.50.720">
    <property type="entry name" value="NAD(P)-binding Rossmann-like Domain"/>
    <property type="match status" value="1"/>
</dbReference>
<dbReference type="HAMAP" id="MF_01576">
    <property type="entry name" value="THF_DHG_CYH"/>
    <property type="match status" value="1"/>
</dbReference>
<dbReference type="InterPro" id="IPR046346">
    <property type="entry name" value="Aminoacid_DH-like_N_sf"/>
</dbReference>
<dbReference type="InterPro" id="IPR036291">
    <property type="entry name" value="NAD(P)-bd_dom_sf"/>
</dbReference>
<dbReference type="InterPro" id="IPR000672">
    <property type="entry name" value="THF_DH/CycHdrlase"/>
</dbReference>
<dbReference type="InterPro" id="IPR020630">
    <property type="entry name" value="THF_DH/CycHdrlase_cat_dom"/>
</dbReference>
<dbReference type="InterPro" id="IPR020867">
    <property type="entry name" value="THF_DH/CycHdrlase_CS"/>
</dbReference>
<dbReference type="InterPro" id="IPR020631">
    <property type="entry name" value="THF_DH/CycHdrlase_NAD-bd_dom"/>
</dbReference>
<dbReference type="NCBIfam" id="NF008058">
    <property type="entry name" value="PRK10792.1"/>
    <property type="match status" value="1"/>
</dbReference>
<dbReference type="NCBIfam" id="NF010783">
    <property type="entry name" value="PRK14186.1"/>
    <property type="match status" value="1"/>
</dbReference>
<dbReference type="PANTHER" id="PTHR48099:SF5">
    <property type="entry name" value="C-1-TETRAHYDROFOLATE SYNTHASE, CYTOPLASMIC"/>
    <property type="match status" value="1"/>
</dbReference>
<dbReference type="PANTHER" id="PTHR48099">
    <property type="entry name" value="C-1-TETRAHYDROFOLATE SYNTHASE, CYTOPLASMIC-RELATED"/>
    <property type="match status" value="1"/>
</dbReference>
<dbReference type="Pfam" id="PF00763">
    <property type="entry name" value="THF_DHG_CYH"/>
    <property type="match status" value="1"/>
</dbReference>
<dbReference type="Pfam" id="PF02882">
    <property type="entry name" value="THF_DHG_CYH_C"/>
    <property type="match status" value="1"/>
</dbReference>
<dbReference type="PRINTS" id="PR00085">
    <property type="entry name" value="THFDHDRGNASE"/>
</dbReference>
<dbReference type="SUPFAM" id="SSF53223">
    <property type="entry name" value="Aminoacid dehydrogenase-like, N-terminal domain"/>
    <property type="match status" value="1"/>
</dbReference>
<dbReference type="SUPFAM" id="SSF51735">
    <property type="entry name" value="NAD(P)-binding Rossmann-fold domains"/>
    <property type="match status" value="1"/>
</dbReference>
<dbReference type="PROSITE" id="PS00766">
    <property type="entry name" value="THF_DHG_CYH_1"/>
    <property type="match status" value="1"/>
</dbReference>
<dbReference type="PROSITE" id="PS00767">
    <property type="entry name" value="THF_DHG_CYH_2"/>
    <property type="match status" value="1"/>
</dbReference>
<reference key="1">
    <citation type="submission" date="2007-08" db="EMBL/GenBank/DDBJ databases">
        <authorList>
            <consortium name="The Citrobacter koseri Genome Sequencing Project"/>
            <person name="McClelland M."/>
            <person name="Sanderson E.K."/>
            <person name="Porwollik S."/>
            <person name="Spieth J."/>
            <person name="Clifton W.S."/>
            <person name="Latreille P."/>
            <person name="Courtney L."/>
            <person name="Wang C."/>
            <person name="Pepin K."/>
            <person name="Bhonagiri V."/>
            <person name="Nash W."/>
            <person name="Johnson M."/>
            <person name="Thiruvilangam P."/>
            <person name="Wilson R."/>
        </authorList>
    </citation>
    <scope>NUCLEOTIDE SEQUENCE [LARGE SCALE GENOMIC DNA]</scope>
    <source>
        <strain>ATCC BAA-895 / CDC 4225-83 / SGSC4696</strain>
    </source>
</reference>
<sequence>MAAKIIDGKTIAQQVRSEVAQKVQARVAAGLRAPGLAVVLVGSNPASQIYVASKRKACEEVGFVSRSYDLPETTSEAELLELIDTLNADNTIDGILVQLPLPAGIDNVKVLERIAPDKDVDGFHPYNVGRLCQRAPRLRPCTPRGIVTLLERYNIDTFGLNAVVIGASNIVGRPMSMELLLAGCTTTVTHRFTKDLRRHVEHADLLIVAVGKPGFIPGEWIKEGAIVIDVGINRLENGKVVGDVVFEDAAARASYITPVPGGVGPMTVATLIENTLQACVEYHDPQGK</sequence>
<comment type="function">
    <text evidence="1">Catalyzes the oxidation of 5,10-methylenetetrahydrofolate to 5,10-methenyltetrahydrofolate and then the hydrolysis of 5,10-methenyltetrahydrofolate to 10-formyltetrahydrofolate.</text>
</comment>
<comment type="catalytic activity">
    <reaction evidence="1">
        <text>(6R)-5,10-methylene-5,6,7,8-tetrahydrofolate + NADP(+) = (6R)-5,10-methenyltetrahydrofolate + NADPH</text>
        <dbReference type="Rhea" id="RHEA:22812"/>
        <dbReference type="ChEBI" id="CHEBI:15636"/>
        <dbReference type="ChEBI" id="CHEBI:57455"/>
        <dbReference type="ChEBI" id="CHEBI:57783"/>
        <dbReference type="ChEBI" id="CHEBI:58349"/>
        <dbReference type="EC" id="1.5.1.5"/>
    </reaction>
</comment>
<comment type="catalytic activity">
    <reaction evidence="1">
        <text>(6R)-5,10-methenyltetrahydrofolate + H2O = (6R)-10-formyltetrahydrofolate + H(+)</text>
        <dbReference type="Rhea" id="RHEA:23700"/>
        <dbReference type="ChEBI" id="CHEBI:15377"/>
        <dbReference type="ChEBI" id="CHEBI:15378"/>
        <dbReference type="ChEBI" id="CHEBI:57455"/>
        <dbReference type="ChEBI" id="CHEBI:195366"/>
        <dbReference type="EC" id="3.5.4.9"/>
    </reaction>
</comment>
<comment type="pathway">
    <text evidence="1">One-carbon metabolism; tetrahydrofolate interconversion.</text>
</comment>
<comment type="subunit">
    <text evidence="1">Homodimer.</text>
</comment>
<comment type="similarity">
    <text evidence="1">Belongs to the tetrahydrofolate dehydrogenase/cyclohydrolase family.</text>
</comment>
<name>FOLD_CITK8</name>
<organism>
    <name type="scientific">Citrobacter koseri (strain ATCC BAA-895 / CDC 4225-83 / SGSC4696)</name>
    <dbReference type="NCBI Taxonomy" id="290338"/>
    <lineage>
        <taxon>Bacteria</taxon>
        <taxon>Pseudomonadati</taxon>
        <taxon>Pseudomonadota</taxon>
        <taxon>Gammaproteobacteria</taxon>
        <taxon>Enterobacterales</taxon>
        <taxon>Enterobacteriaceae</taxon>
        <taxon>Citrobacter</taxon>
    </lineage>
</organism>
<proteinExistence type="inferred from homology"/>
<keyword id="KW-0028">Amino-acid biosynthesis</keyword>
<keyword id="KW-0368">Histidine biosynthesis</keyword>
<keyword id="KW-0378">Hydrolase</keyword>
<keyword id="KW-0486">Methionine biosynthesis</keyword>
<keyword id="KW-0511">Multifunctional enzyme</keyword>
<keyword id="KW-0521">NADP</keyword>
<keyword id="KW-0554">One-carbon metabolism</keyword>
<keyword id="KW-0560">Oxidoreductase</keyword>
<keyword id="KW-0658">Purine biosynthesis</keyword>
<keyword id="KW-1185">Reference proteome</keyword>
<protein>
    <recommendedName>
        <fullName evidence="1">Bifunctional protein FolD</fullName>
    </recommendedName>
    <domain>
        <recommendedName>
            <fullName evidence="1">Methylenetetrahydrofolate dehydrogenase</fullName>
            <ecNumber evidence="1">1.5.1.5</ecNumber>
        </recommendedName>
    </domain>
    <domain>
        <recommendedName>
            <fullName evidence="1">Methenyltetrahydrofolate cyclohydrolase</fullName>
            <ecNumber evidence="1">3.5.4.9</ecNumber>
        </recommendedName>
    </domain>
</protein>
<feature type="chain" id="PRO_1000069236" description="Bifunctional protein FolD">
    <location>
        <begin position="1"/>
        <end position="288"/>
    </location>
</feature>
<feature type="binding site" evidence="1">
    <location>
        <begin position="166"/>
        <end position="168"/>
    </location>
    <ligand>
        <name>NADP(+)</name>
        <dbReference type="ChEBI" id="CHEBI:58349"/>
    </ligand>
</feature>
<feature type="binding site" evidence="1">
    <location>
        <position position="232"/>
    </location>
    <ligand>
        <name>NADP(+)</name>
        <dbReference type="ChEBI" id="CHEBI:58349"/>
    </ligand>
</feature>